<evidence type="ECO:0000255" key="1"/>
<evidence type="ECO:0000305" key="2"/>
<geneLocation type="plasmid">
    <name>pLS1</name>
</geneLocation>
<proteinExistence type="inferred from homology"/>
<comment type="function">
    <text>Resistance to tetracycline by an active tetracycline efflux. This is an energy-dependent process that decreases the accumulation of the antibiotic in whole cells. This protein functions as a metal-tetracycline/H(+) antiporter.</text>
</comment>
<comment type="subcellular location">
    <subcellularLocation>
        <location>Cell membrane</location>
        <topology>Multi-pass membrane protein</topology>
    </subcellularLocation>
</comment>
<comment type="similarity">
    <text evidence="2">Belongs to the major facilitator superfamily. TCR/Tet family.</text>
</comment>
<reference key="1">
    <citation type="journal article" date="1986" name="J. Mol. Biol.">
        <title>Identification and analysis of genes for tetracycline resistance and replication functions in the broad-host-range plasmid pLS1.</title>
        <authorList>
            <person name="Lacks S.A."/>
            <person name="Lopez P."/>
            <person name="Greenberg B."/>
            <person name="Espinosa M."/>
        </authorList>
    </citation>
    <scope>NUCLEOTIDE SEQUENCE [GENOMIC DNA]</scope>
</reference>
<feature type="chain" id="PRO_0000173389" description="Tetracycline resistance protein">
    <location>
        <begin position="1"/>
        <end position="458"/>
    </location>
</feature>
<feature type="transmembrane region" description="Helical" evidence="1">
    <location>
        <begin position="12"/>
        <end position="33"/>
    </location>
</feature>
<feature type="transmembrane region" description="Helical" evidence="1">
    <location>
        <begin position="81"/>
        <end position="100"/>
    </location>
</feature>
<feature type="transmembrane region" description="Helical" evidence="1">
    <location>
        <begin position="111"/>
        <end position="129"/>
    </location>
</feature>
<feature type="transmembrane region" description="Helical" evidence="1">
    <location>
        <begin position="140"/>
        <end position="162"/>
    </location>
</feature>
<feature type="transmembrane region" description="Helical" evidence="1">
    <location>
        <begin position="165"/>
        <end position="185"/>
    </location>
</feature>
<feature type="transmembrane region" description="Helical" evidence="1">
    <location>
        <begin position="201"/>
        <end position="221"/>
    </location>
</feature>
<feature type="transmembrane region" description="Helical" evidence="1">
    <location>
        <begin position="223"/>
        <end position="240"/>
    </location>
</feature>
<feature type="transmembrane region" description="Helical" evidence="1">
    <location>
        <begin position="256"/>
        <end position="276"/>
    </location>
</feature>
<feature type="transmembrane region" description="Helical" evidence="1">
    <location>
        <begin position="297"/>
        <end position="317"/>
    </location>
</feature>
<feature type="transmembrane region" description="Helical" evidence="1">
    <location>
        <begin position="324"/>
        <end position="344"/>
    </location>
</feature>
<feature type="transmembrane region" description="Helical" evidence="1">
    <location>
        <begin position="346"/>
        <end position="365"/>
    </location>
</feature>
<feature type="transmembrane region" description="Helical" evidence="1">
    <location>
        <begin position="432"/>
        <end position="451"/>
    </location>
</feature>
<gene>
    <name type="primary">tet</name>
</gene>
<dbReference type="EMBL" id="M29725">
    <property type="protein sequence ID" value="AAA98167.1"/>
    <property type="molecule type" value="Genomic_DNA"/>
</dbReference>
<dbReference type="SMR" id="P0A4K6"/>
<dbReference type="GO" id="GO:0005886">
    <property type="term" value="C:plasma membrane"/>
    <property type="evidence" value="ECO:0007669"/>
    <property type="project" value="UniProtKB-SubCell"/>
</dbReference>
<dbReference type="GO" id="GO:0015297">
    <property type="term" value="F:antiporter activity"/>
    <property type="evidence" value="ECO:0007669"/>
    <property type="project" value="UniProtKB-KW"/>
</dbReference>
<dbReference type="GO" id="GO:1902600">
    <property type="term" value="P:proton transmembrane transport"/>
    <property type="evidence" value="ECO:0007669"/>
    <property type="project" value="UniProtKB-KW"/>
</dbReference>
<dbReference type="GO" id="GO:0046677">
    <property type="term" value="P:response to antibiotic"/>
    <property type="evidence" value="ECO:0007669"/>
    <property type="project" value="UniProtKB-KW"/>
</dbReference>
<dbReference type="CDD" id="cd17321">
    <property type="entry name" value="MFS_MMR_MDR_like"/>
    <property type="match status" value="1"/>
</dbReference>
<dbReference type="Gene3D" id="1.20.1250.20">
    <property type="entry name" value="MFS general substrate transporter like domains"/>
    <property type="match status" value="1"/>
</dbReference>
<dbReference type="Gene3D" id="1.20.1720.10">
    <property type="entry name" value="Multidrug resistance protein D"/>
    <property type="match status" value="1"/>
</dbReference>
<dbReference type="InterPro" id="IPR011701">
    <property type="entry name" value="MFS"/>
</dbReference>
<dbReference type="InterPro" id="IPR020846">
    <property type="entry name" value="MFS_dom"/>
</dbReference>
<dbReference type="InterPro" id="IPR036259">
    <property type="entry name" value="MFS_trans_sf"/>
</dbReference>
<dbReference type="NCBIfam" id="NF012185">
    <property type="entry name" value="tet_MFS_L"/>
    <property type="match status" value="1"/>
</dbReference>
<dbReference type="NCBIfam" id="NF012175">
    <property type="entry name" value="tet_MFS_L_K_45"/>
    <property type="match status" value="1"/>
</dbReference>
<dbReference type="PANTHER" id="PTHR23501">
    <property type="entry name" value="MAJOR FACILITATOR SUPERFAMILY"/>
    <property type="match status" value="1"/>
</dbReference>
<dbReference type="PANTHER" id="PTHR23501:SF188">
    <property type="entry name" value="TETRACYCLINE RESISTANCE PROTEIN"/>
    <property type="match status" value="1"/>
</dbReference>
<dbReference type="Pfam" id="PF07690">
    <property type="entry name" value="MFS_1"/>
    <property type="match status" value="1"/>
</dbReference>
<dbReference type="PRINTS" id="PR01036">
    <property type="entry name" value="TCRTETB"/>
</dbReference>
<dbReference type="SUPFAM" id="SSF103473">
    <property type="entry name" value="MFS general substrate transporter"/>
    <property type="match status" value="1"/>
</dbReference>
<dbReference type="PROSITE" id="PS50850">
    <property type="entry name" value="MFS"/>
    <property type="match status" value="1"/>
</dbReference>
<organism>
    <name type="scientific">Streptococcus pneumoniae</name>
    <dbReference type="NCBI Taxonomy" id="1313"/>
    <lineage>
        <taxon>Bacteria</taxon>
        <taxon>Bacillati</taxon>
        <taxon>Bacillota</taxon>
        <taxon>Bacilli</taxon>
        <taxon>Lactobacillales</taxon>
        <taxon>Streptococcaceae</taxon>
        <taxon>Streptococcus</taxon>
    </lineage>
</organism>
<protein>
    <recommendedName>
        <fullName>Tetracycline resistance protein</fullName>
    </recommendedName>
</protein>
<keyword id="KW-0046">Antibiotic resistance</keyword>
<keyword id="KW-0050">Antiport</keyword>
<keyword id="KW-1003">Cell membrane</keyword>
<keyword id="KW-0375">Hydrogen ion transport</keyword>
<keyword id="KW-0406">Ion transport</keyword>
<keyword id="KW-0472">Membrane</keyword>
<keyword id="KW-0614">Plasmid</keyword>
<keyword id="KW-0812">Transmembrane</keyword>
<keyword id="KW-1133">Transmembrane helix</keyword>
<keyword id="KW-0813">Transport</keyword>
<sequence length="458" mass="50093">MNTSYSQSNLRHNQILIWLCILSFFSVLNEMVLNVSLPDIANDFNKPPASTNWVNTAFMLTFSIGTAVYGKLSDQLGIKRLLLFGIIINCFGSVIGFVGHSFFSLLIMARFIQGAGAAAFPALVMVVVARYIPKENRGKAFGLIGSIVAMGEGVGPAIGGMIAHYIHWSYLLLIPMITIITVPFLMKLLKKEVRIKGHFDIKGIILMSVGIVFFMLFTTSYSISFLIVSVLSFLIFVKHIRKVTDPFVDPGLGKNIPFMIGVLCGGIIFGTVAGFVSMVPYMMKDVHQLSTAEIGSVIIFPGTMSVIIFGYIGGILVDRRGPLYVLNIGVTFLSVSFLTASFLLETTSWFMTIIIVFVLGGLSFTKTVISTIVSSSLKQQEAGAGMSLLNFTSFLSEGTGIAIVGGLLSIPLLDQRLLPMEVDQSTYLYSNLLLLFSGIIVISWLVTLNVYKHSQRDF</sequence>
<name>TCR_STREE</name>
<accession>P0A4K6</accession>
<accession>P11063</accession>
<accession>P72219</accession>